<evidence type="ECO:0000250" key="1"/>
<evidence type="ECO:0000250" key="2">
    <source>
        <dbReference type="UniProtKB" id="Q15464"/>
    </source>
</evidence>
<evidence type="ECO:0000255" key="3">
    <source>
        <dbReference type="PROSITE-ProRule" id="PRU00191"/>
    </source>
</evidence>
<evidence type="ECO:0000256" key="4">
    <source>
        <dbReference type="SAM" id="MobiDB-lite"/>
    </source>
</evidence>
<evidence type="ECO:0000269" key="5">
    <source>
    </source>
</evidence>
<evidence type="ECO:0000269" key="6">
    <source>
    </source>
</evidence>
<evidence type="ECO:0000269" key="7">
    <source>
    </source>
</evidence>
<evidence type="ECO:0000303" key="8">
    <source>
    </source>
</evidence>
<evidence type="ECO:0000305" key="9"/>
<evidence type="ECO:0007744" key="10">
    <source>
    </source>
</evidence>
<evidence type="ECO:0007744" key="11">
    <source>
    </source>
</evidence>
<protein>
    <recommendedName>
        <fullName>SH2 domain-containing adapter protein B</fullName>
    </recommendedName>
</protein>
<accession>Q6PD21</accession>
<accession>A2AKW3</accession>
<accession>Q3ULM3</accession>
<organism>
    <name type="scientific">Mus musculus</name>
    <name type="common">Mouse</name>
    <dbReference type="NCBI Taxonomy" id="10090"/>
    <lineage>
        <taxon>Eukaryota</taxon>
        <taxon>Metazoa</taxon>
        <taxon>Chordata</taxon>
        <taxon>Craniata</taxon>
        <taxon>Vertebrata</taxon>
        <taxon>Euteleostomi</taxon>
        <taxon>Mammalia</taxon>
        <taxon>Eutheria</taxon>
        <taxon>Euarchontoglires</taxon>
        <taxon>Glires</taxon>
        <taxon>Rodentia</taxon>
        <taxon>Myomorpha</taxon>
        <taxon>Muroidea</taxon>
        <taxon>Muridae</taxon>
        <taxon>Murinae</taxon>
        <taxon>Mus</taxon>
        <taxon>Mus</taxon>
    </lineage>
</organism>
<reference key="1">
    <citation type="journal article" date="2005" name="Science">
        <title>The transcriptional landscape of the mammalian genome.</title>
        <authorList>
            <person name="Carninci P."/>
            <person name="Kasukawa T."/>
            <person name="Katayama S."/>
            <person name="Gough J."/>
            <person name="Frith M.C."/>
            <person name="Maeda N."/>
            <person name="Oyama R."/>
            <person name="Ravasi T."/>
            <person name="Lenhard B."/>
            <person name="Wells C."/>
            <person name="Kodzius R."/>
            <person name="Shimokawa K."/>
            <person name="Bajic V.B."/>
            <person name="Brenner S.E."/>
            <person name="Batalov S."/>
            <person name="Forrest A.R."/>
            <person name="Zavolan M."/>
            <person name="Davis M.J."/>
            <person name="Wilming L.G."/>
            <person name="Aidinis V."/>
            <person name="Allen J.E."/>
            <person name="Ambesi-Impiombato A."/>
            <person name="Apweiler R."/>
            <person name="Aturaliya R.N."/>
            <person name="Bailey T.L."/>
            <person name="Bansal M."/>
            <person name="Baxter L."/>
            <person name="Beisel K.W."/>
            <person name="Bersano T."/>
            <person name="Bono H."/>
            <person name="Chalk A.M."/>
            <person name="Chiu K.P."/>
            <person name="Choudhary V."/>
            <person name="Christoffels A."/>
            <person name="Clutterbuck D.R."/>
            <person name="Crowe M.L."/>
            <person name="Dalla E."/>
            <person name="Dalrymple B.P."/>
            <person name="de Bono B."/>
            <person name="Della Gatta G."/>
            <person name="di Bernardo D."/>
            <person name="Down T."/>
            <person name="Engstrom P."/>
            <person name="Fagiolini M."/>
            <person name="Faulkner G."/>
            <person name="Fletcher C.F."/>
            <person name="Fukushima T."/>
            <person name="Furuno M."/>
            <person name="Futaki S."/>
            <person name="Gariboldi M."/>
            <person name="Georgii-Hemming P."/>
            <person name="Gingeras T.R."/>
            <person name="Gojobori T."/>
            <person name="Green R.E."/>
            <person name="Gustincich S."/>
            <person name="Harbers M."/>
            <person name="Hayashi Y."/>
            <person name="Hensch T.K."/>
            <person name="Hirokawa N."/>
            <person name="Hill D."/>
            <person name="Huminiecki L."/>
            <person name="Iacono M."/>
            <person name="Ikeo K."/>
            <person name="Iwama A."/>
            <person name="Ishikawa T."/>
            <person name="Jakt M."/>
            <person name="Kanapin A."/>
            <person name="Katoh M."/>
            <person name="Kawasawa Y."/>
            <person name="Kelso J."/>
            <person name="Kitamura H."/>
            <person name="Kitano H."/>
            <person name="Kollias G."/>
            <person name="Krishnan S.P."/>
            <person name="Kruger A."/>
            <person name="Kummerfeld S.K."/>
            <person name="Kurochkin I.V."/>
            <person name="Lareau L.F."/>
            <person name="Lazarevic D."/>
            <person name="Lipovich L."/>
            <person name="Liu J."/>
            <person name="Liuni S."/>
            <person name="McWilliam S."/>
            <person name="Madan Babu M."/>
            <person name="Madera M."/>
            <person name="Marchionni L."/>
            <person name="Matsuda H."/>
            <person name="Matsuzawa S."/>
            <person name="Miki H."/>
            <person name="Mignone F."/>
            <person name="Miyake S."/>
            <person name="Morris K."/>
            <person name="Mottagui-Tabar S."/>
            <person name="Mulder N."/>
            <person name="Nakano N."/>
            <person name="Nakauchi H."/>
            <person name="Ng P."/>
            <person name="Nilsson R."/>
            <person name="Nishiguchi S."/>
            <person name="Nishikawa S."/>
            <person name="Nori F."/>
            <person name="Ohara O."/>
            <person name="Okazaki Y."/>
            <person name="Orlando V."/>
            <person name="Pang K.C."/>
            <person name="Pavan W.J."/>
            <person name="Pavesi G."/>
            <person name="Pesole G."/>
            <person name="Petrovsky N."/>
            <person name="Piazza S."/>
            <person name="Reed J."/>
            <person name="Reid J.F."/>
            <person name="Ring B.Z."/>
            <person name="Ringwald M."/>
            <person name="Rost B."/>
            <person name="Ruan Y."/>
            <person name="Salzberg S.L."/>
            <person name="Sandelin A."/>
            <person name="Schneider C."/>
            <person name="Schoenbach C."/>
            <person name="Sekiguchi K."/>
            <person name="Semple C.A."/>
            <person name="Seno S."/>
            <person name="Sessa L."/>
            <person name="Sheng Y."/>
            <person name="Shibata Y."/>
            <person name="Shimada H."/>
            <person name="Shimada K."/>
            <person name="Silva D."/>
            <person name="Sinclair B."/>
            <person name="Sperling S."/>
            <person name="Stupka E."/>
            <person name="Sugiura K."/>
            <person name="Sultana R."/>
            <person name="Takenaka Y."/>
            <person name="Taki K."/>
            <person name="Tammoja K."/>
            <person name="Tan S.L."/>
            <person name="Tang S."/>
            <person name="Taylor M.S."/>
            <person name="Tegner J."/>
            <person name="Teichmann S.A."/>
            <person name="Ueda H.R."/>
            <person name="van Nimwegen E."/>
            <person name="Verardo R."/>
            <person name="Wei C.L."/>
            <person name="Yagi K."/>
            <person name="Yamanishi H."/>
            <person name="Zabarovsky E."/>
            <person name="Zhu S."/>
            <person name="Zimmer A."/>
            <person name="Hide W."/>
            <person name="Bult C."/>
            <person name="Grimmond S.M."/>
            <person name="Teasdale R.D."/>
            <person name="Liu E.T."/>
            <person name="Brusic V."/>
            <person name="Quackenbush J."/>
            <person name="Wahlestedt C."/>
            <person name="Mattick J.S."/>
            <person name="Hume D.A."/>
            <person name="Kai C."/>
            <person name="Sasaki D."/>
            <person name="Tomaru Y."/>
            <person name="Fukuda S."/>
            <person name="Kanamori-Katayama M."/>
            <person name="Suzuki M."/>
            <person name="Aoki J."/>
            <person name="Arakawa T."/>
            <person name="Iida J."/>
            <person name="Imamura K."/>
            <person name="Itoh M."/>
            <person name="Kato T."/>
            <person name="Kawaji H."/>
            <person name="Kawagashira N."/>
            <person name="Kawashima T."/>
            <person name="Kojima M."/>
            <person name="Kondo S."/>
            <person name="Konno H."/>
            <person name="Nakano K."/>
            <person name="Ninomiya N."/>
            <person name="Nishio T."/>
            <person name="Okada M."/>
            <person name="Plessy C."/>
            <person name="Shibata K."/>
            <person name="Shiraki T."/>
            <person name="Suzuki S."/>
            <person name="Tagami M."/>
            <person name="Waki K."/>
            <person name="Watahiki A."/>
            <person name="Okamura-Oho Y."/>
            <person name="Suzuki H."/>
            <person name="Kawai J."/>
            <person name="Hayashizaki Y."/>
        </authorList>
    </citation>
    <scope>NUCLEOTIDE SEQUENCE [LARGE SCALE MRNA] (ISOFORM 2)</scope>
    <source>
        <strain>C57BL/6J</strain>
        <tissue>Embryo</tissue>
    </source>
</reference>
<reference key="2">
    <citation type="journal article" date="2009" name="PLoS Biol.">
        <title>Lineage-specific biology revealed by a finished genome assembly of the mouse.</title>
        <authorList>
            <person name="Church D.M."/>
            <person name="Goodstadt L."/>
            <person name="Hillier L.W."/>
            <person name="Zody M.C."/>
            <person name="Goldstein S."/>
            <person name="She X."/>
            <person name="Bult C.J."/>
            <person name="Agarwala R."/>
            <person name="Cherry J.L."/>
            <person name="DiCuccio M."/>
            <person name="Hlavina W."/>
            <person name="Kapustin Y."/>
            <person name="Meric P."/>
            <person name="Maglott D."/>
            <person name="Birtle Z."/>
            <person name="Marques A.C."/>
            <person name="Graves T."/>
            <person name="Zhou S."/>
            <person name="Teague B."/>
            <person name="Potamousis K."/>
            <person name="Churas C."/>
            <person name="Place M."/>
            <person name="Herschleb J."/>
            <person name="Runnheim R."/>
            <person name="Forrest D."/>
            <person name="Amos-Landgraf J."/>
            <person name="Schwartz D.C."/>
            <person name="Cheng Z."/>
            <person name="Lindblad-Toh K."/>
            <person name="Eichler E.E."/>
            <person name="Ponting C.P."/>
        </authorList>
    </citation>
    <scope>NUCLEOTIDE SEQUENCE [LARGE SCALE GENOMIC DNA]</scope>
    <source>
        <strain>C57BL/6J</strain>
    </source>
</reference>
<reference key="3">
    <citation type="journal article" date="2004" name="Genome Res.">
        <title>The status, quality, and expansion of the NIH full-length cDNA project: the Mammalian Gene Collection (MGC).</title>
        <authorList>
            <consortium name="The MGC Project Team"/>
        </authorList>
    </citation>
    <scope>NUCLEOTIDE SEQUENCE [LARGE SCALE MRNA] (ISOFORM 1)</scope>
    <source>
        <strain>C57BL/6J</strain>
        <tissue>Fetal brain</tissue>
    </source>
</reference>
<reference key="4">
    <citation type="journal article" date="1994" name="Oncogene">
        <title>Shb is a ubiquitously expressed Src homology 2 protein.</title>
        <authorList>
            <person name="Welsh M."/>
            <person name="Mares J."/>
            <person name="Karlsson T."/>
            <person name="Lavergne C."/>
            <person name="Breant B."/>
            <person name="Claesson-Welsh L."/>
        </authorList>
    </citation>
    <scope>TISSUE SPECIFICITY</scope>
</reference>
<reference key="5">
    <citation type="journal article" date="1996" name="Cell. Signal.">
        <title>Control of SHB gene expression by protein phosphorylation.</title>
        <authorList>
            <person name="Lavergne C."/>
            <person name="Mares J."/>
            <person name="Karlsson T."/>
            <person name="Breant B."/>
            <person name="Welsh M."/>
        </authorList>
    </citation>
    <scope>INDUCTION BY OKADAIC ACID AND GENISTEIN</scope>
</reference>
<reference key="6">
    <citation type="journal article" date="2002" name="Mol. Biol. Cell">
        <title>The Shb adaptor protein binds to tyrosine 766 in the FGFR-1 and regulates the Ras/MEK/MAPK pathway via FRS2 phosphorylation in endothelial cells.</title>
        <authorList>
            <person name="Cross M.J."/>
            <person name="Lu L."/>
            <person name="Magnusson P."/>
            <person name="Nyqvist D."/>
            <person name="Holmqvist K."/>
            <person name="Welsh M."/>
            <person name="Claesson-Welsh L."/>
        </authorList>
    </citation>
    <scope>INTERACTION WITH PTPN11</scope>
</reference>
<reference key="7">
    <citation type="journal article" date="2007" name="Proc. Natl. Acad. Sci. U.S.A.">
        <title>Large-scale phosphorylation analysis of mouse liver.</title>
        <authorList>
            <person name="Villen J."/>
            <person name="Beausoleil S.A."/>
            <person name="Gerber S.A."/>
            <person name="Gygi S.P."/>
        </authorList>
    </citation>
    <scope>IDENTIFICATION BY MASS SPECTROMETRY [LARGE SCALE ANALYSIS]</scope>
    <source>
        <tissue>Liver</tissue>
    </source>
</reference>
<reference key="8">
    <citation type="journal article" date="2009" name="Immunity">
        <title>The phagosomal proteome in interferon-gamma-activated macrophages.</title>
        <authorList>
            <person name="Trost M."/>
            <person name="English L."/>
            <person name="Lemieux S."/>
            <person name="Courcelles M."/>
            <person name="Desjardins M."/>
            <person name="Thibault P."/>
        </authorList>
    </citation>
    <scope>PHOSPHORYLATION [LARGE SCALE ANALYSIS] AT SER-382</scope>
    <scope>IDENTIFICATION BY MASS SPECTROMETRY [LARGE SCALE ANALYSIS]</scope>
</reference>
<reference key="9">
    <citation type="journal article" date="2010" name="Cell">
        <title>A tissue-specific atlas of mouse protein phosphorylation and expression.</title>
        <authorList>
            <person name="Huttlin E.L."/>
            <person name="Jedrychowski M.P."/>
            <person name="Elias J.E."/>
            <person name="Goswami T."/>
            <person name="Rad R."/>
            <person name="Beausoleil S.A."/>
            <person name="Villen J."/>
            <person name="Haas W."/>
            <person name="Sowa M.E."/>
            <person name="Gygi S.P."/>
        </authorList>
    </citation>
    <scope>PHOSPHORYLATION [LARGE SCALE ANALYSIS] AT SER-382</scope>
    <scope>IDENTIFICATION BY MASS SPECTROMETRY [LARGE SCALE ANALYSIS]</scope>
    <source>
        <tissue>Brain</tissue>
        <tissue>Heart</tissue>
        <tissue>Kidney</tissue>
        <tissue>Lung</tissue>
        <tissue>Pancreas</tissue>
    </source>
</reference>
<dbReference type="EMBL" id="AK145414">
    <property type="protein sequence ID" value="BAE26425.1"/>
    <property type="molecule type" value="mRNA"/>
</dbReference>
<dbReference type="EMBL" id="AL772376">
    <property type="status" value="NOT_ANNOTATED_CDS"/>
    <property type="molecule type" value="Genomic_DNA"/>
</dbReference>
<dbReference type="EMBL" id="BC058986">
    <property type="protein sequence ID" value="AAH58986.1"/>
    <property type="status" value="ALT_INIT"/>
    <property type="molecule type" value="mRNA"/>
</dbReference>
<dbReference type="CCDS" id="CCDS51173.1">
    <molecule id="Q6PD21-1"/>
</dbReference>
<dbReference type="RefSeq" id="NP_001028478.1">
    <molecule id="Q6PD21-1"/>
    <property type="nucleotide sequence ID" value="NM_001033306.2"/>
</dbReference>
<dbReference type="SMR" id="Q6PD21"/>
<dbReference type="BioGRID" id="230937">
    <property type="interactions" value="3"/>
</dbReference>
<dbReference type="FunCoup" id="Q6PD21">
    <property type="interactions" value="711"/>
</dbReference>
<dbReference type="IntAct" id="Q6PD21">
    <property type="interactions" value="2"/>
</dbReference>
<dbReference type="MINT" id="Q6PD21"/>
<dbReference type="STRING" id="10090.ENSMUSP00000060433"/>
<dbReference type="iPTMnet" id="Q6PD21"/>
<dbReference type="PhosphoSitePlus" id="Q6PD21"/>
<dbReference type="PaxDb" id="10090-ENSMUSP00000060433"/>
<dbReference type="ProteomicsDB" id="261349">
    <molecule id="Q6PD21-1"/>
</dbReference>
<dbReference type="ProteomicsDB" id="261350">
    <molecule id="Q6PD21-2"/>
</dbReference>
<dbReference type="Ensembl" id="ENSMUST00000061986.12">
    <molecule id="Q6PD21-1"/>
    <property type="protein sequence ID" value="ENSMUSP00000060433.6"/>
    <property type="gene ID" value="ENSMUSG00000044813.16"/>
</dbReference>
<dbReference type="GeneID" id="230126"/>
<dbReference type="KEGG" id="mmu:230126"/>
<dbReference type="UCSC" id="uc008sst.2">
    <molecule id="Q6PD21-1"/>
    <property type="organism name" value="mouse"/>
</dbReference>
<dbReference type="UCSC" id="uc008ssu.1">
    <molecule id="Q6PD21-2"/>
    <property type="organism name" value="mouse"/>
</dbReference>
<dbReference type="AGR" id="MGI:98294"/>
<dbReference type="CTD" id="6461"/>
<dbReference type="MGI" id="MGI:98294">
    <property type="gene designation" value="Shb"/>
</dbReference>
<dbReference type="VEuPathDB" id="HostDB:ENSMUSG00000044813"/>
<dbReference type="eggNOG" id="ENOG502RT81">
    <property type="taxonomic scope" value="Eukaryota"/>
</dbReference>
<dbReference type="GeneTree" id="ENSGT00940000161591"/>
<dbReference type="HOGENOM" id="CLU_029444_0_0_1"/>
<dbReference type="InParanoid" id="Q6PD21"/>
<dbReference type="OMA" id="RIMTELQ"/>
<dbReference type="OrthoDB" id="5914531at2759"/>
<dbReference type="PhylomeDB" id="Q6PD21"/>
<dbReference type="TreeFam" id="TF325799"/>
<dbReference type="Reactome" id="R-MMU-4420097">
    <property type="pathway name" value="VEGFA-VEGFR2 Pathway"/>
</dbReference>
<dbReference type="BioGRID-ORCS" id="230126">
    <property type="hits" value="5 hits in 78 CRISPR screens"/>
</dbReference>
<dbReference type="ChiTaRS" id="Shb">
    <property type="organism name" value="mouse"/>
</dbReference>
<dbReference type="PRO" id="PR:Q6PD21"/>
<dbReference type="Proteomes" id="UP000000589">
    <property type="component" value="Chromosome 4"/>
</dbReference>
<dbReference type="RNAct" id="Q6PD21">
    <property type="molecule type" value="protein"/>
</dbReference>
<dbReference type="Bgee" id="ENSMUSG00000044813">
    <property type="expression patterns" value="Expressed in gastrula and 202 other cell types or tissues"/>
</dbReference>
<dbReference type="ExpressionAtlas" id="Q6PD21">
    <property type="expression patterns" value="baseline and differential"/>
</dbReference>
<dbReference type="GO" id="GO:0036464">
    <property type="term" value="C:cytoplasmic ribonucleoprotein granule"/>
    <property type="evidence" value="ECO:0007669"/>
    <property type="project" value="Ensembl"/>
</dbReference>
<dbReference type="GO" id="GO:0005829">
    <property type="term" value="C:cytosol"/>
    <property type="evidence" value="ECO:0007669"/>
    <property type="project" value="Ensembl"/>
</dbReference>
<dbReference type="GO" id="GO:0005654">
    <property type="term" value="C:nucleoplasm"/>
    <property type="evidence" value="ECO:0007669"/>
    <property type="project" value="Ensembl"/>
</dbReference>
<dbReference type="GO" id="GO:0005886">
    <property type="term" value="C:plasma membrane"/>
    <property type="evidence" value="ECO:0007669"/>
    <property type="project" value="UniProtKB-SubCell"/>
</dbReference>
<dbReference type="GO" id="GO:0001784">
    <property type="term" value="F:phosphotyrosine residue binding"/>
    <property type="evidence" value="ECO:0007669"/>
    <property type="project" value="Ensembl"/>
</dbReference>
<dbReference type="GO" id="GO:0030159">
    <property type="term" value="F:signaling receptor complex adaptor activity"/>
    <property type="evidence" value="ECO:0000314"/>
    <property type="project" value="MGI"/>
</dbReference>
<dbReference type="GO" id="GO:0001525">
    <property type="term" value="P:angiogenesis"/>
    <property type="evidence" value="ECO:0007669"/>
    <property type="project" value="UniProtKB-KW"/>
</dbReference>
<dbReference type="GO" id="GO:0006915">
    <property type="term" value="P:apoptotic process"/>
    <property type="evidence" value="ECO:0007669"/>
    <property type="project" value="UniProtKB-KW"/>
</dbReference>
<dbReference type="GO" id="GO:0042100">
    <property type="term" value="P:B cell proliferation"/>
    <property type="evidence" value="ECO:0000314"/>
    <property type="project" value="MGI"/>
</dbReference>
<dbReference type="GO" id="GO:0001568">
    <property type="term" value="P:blood vessel development"/>
    <property type="evidence" value="ECO:0000315"/>
    <property type="project" value="MGI"/>
</dbReference>
<dbReference type="GO" id="GO:0048514">
    <property type="term" value="P:blood vessel morphogenesis"/>
    <property type="evidence" value="ECO:0000315"/>
    <property type="project" value="MGI"/>
</dbReference>
<dbReference type="GO" id="GO:0071425">
    <property type="term" value="P:hematopoietic stem cell proliferation"/>
    <property type="evidence" value="ECO:0000315"/>
    <property type="project" value="MGI"/>
</dbReference>
<dbReference type="GO" id="GO:0030097">
    <property type="term" value="P:hemopoiesis"/>
    <property type="evidence" value="ECO:0000315"/>
    <property type="project" value="MGI"/>
</dbReference>
<dbReference type="GO" id="GO:1900194">
    <property type="term" value="P:negative regulation of oocyte maturation"/>
    <property type="evidence" value="ECO:0000315"/>
    <property type="project" value="MGI"/>
</dbReference>
<dbReference type="GO" id="GO:0045931">
    <property type="term" value="P:positive regulation of mitotic cell cycle"/>
    <property type="evidence" value="ECO:0000315"/>
    <property type="project" value="MGI"/>
</dbReference>
<dbReference type="GO" id="GO:0045624">
    <property type="term" value="P:positive regulation of T-helper cell differentiation"/>
    <property type="evidence" value="ECO:0000315"/>
    <property type="project" value="MGI"/>
</dbReference>
<dbReference type="GO" id="GO:0050852">
    <property type="term" value="P:T cell receptor signaling pathway"/>
    <property type="evidence" value="ECO:0000315"/>
    <property type="project" value="MGI"/>
</dbReference>
<dbReference type="CDD" id="cd10389">
    <property type="entry name" value="SH2_SHB"/>
    <property type="match status" value="1"/>
</dbReference>
<dbReference type="FunFam" id="3.30.505.10:FF:000021">
    <property type="entry name" value="Putative SH2 domain-containing adapter protein F"/>
    <property type="match status" value="1"/>
</dbReference>
<dbReference type="Gene3D" id="3.30.505.10">
    <property type="entry name" value="SH2 domain"/>
    <property type="match status" value="1"/>
</dbReference>
<dbReference type="InterPro" id="IPR000980">
    <property type="entry name" value="SH2"/>
</dbReference>
<dbReference type="InterPro" id="IPR036860">
    <property type="entry name" value="SH2_dom_sf"/>
</dbReference>
<dbReference type="InterPro" id="IPR051846">
    <property type="entry name" value="SH2_domain_adapters"/>
</dbReference>
<dbReference type="InterPro" id="IPR035045">
    <property type="entry name" value="SHB_SH2"/>
</dbReference>
<dbReference type="PANTHER" id="PTHR15127">
    <property type="entry name" value="HEAVYWEIGHT, ISOFORM A"/>
    <property type="match status" value="1"/>
</dbReference>
<dbReference type="PANTHER" id="PTHR15127:SF31">
    <property type="entry name" value="SH2 DOMAIN-CONTAINING ADAPTER PROTEIN B"/>
    <property type="match status" value="1"/>
</dbReference>
<dbReference type="Pfam" id="PF00017">
    <property type="entry name" value="SH2"/>
    <property type="match status" value="1"/>
</dbReference>
<dbReference type="PRINTS" id="PR00401">
    <property type="entry name" value="SH2DOMAIN"/>
</dbReference>
<dbReference type="SMART" id="SM00252">
    <property type="entry name" value="SH2"/>
    <property type="match status" value="1"/>
</dbReference>
<dbReference type="SUPFAM" id="SSF55550">
    <property type="entry name" value="SH2 domain"/>
    <property type="match status" value="1"/>
</dbReference>
<dbReference type="PROSITE" id="PS50001">
    <property type="entry name" value="SH2"/>
    <property type="match status" value="1"/>
</dbReference>
<keyword id="KW-0025">Alternative splicing</keyword>
<keyword id="KW-0037">Angiogenesis</keyword>
<keyword id="KW-0053">Apoptosis</keyword>
<keyword id="KW-1003">Cell membrane</keyword>
<keyword id="KW-0963">Cytoplasm</keyword>
<keyword id="KW-0217">Developmental protein</keyword>
<keyword id="KW-0221">Differentiation</keyword>
<keyword id="KW-1017">Isopeptide bond</keyword>
<keyword id="KW-0472">Membrane</keyword>
<keyword id="KW-0597">Phosphoprotein</keyword>
<keyword id="KW-1185">Reference proteome</keyword>
<keyword id="KW-0727">SH2 domain</keyword>
<keyword id="KW-0832">Ubl conjugation</keyword>
<gene>
    <name type="primary">Shb</name>
</gene>
<feature type="chain" id="PRO_0000246325" description="SH2 domain-containing adapter protein B">
    <location>
        <begin position="1"/>
        <end position="503"/>
    </location>
</feature>
<feature type="domain" description="SH2" evidence="3">
    <location>
        <begin position="404"/>
        <end position="498"/>
    </location>
</feature>
<feature type="region of interest" description="Disordered" evidence="4">
    <location>
        <begin position="1"/>
        <end position="49"/>
    </location>
</feature>
<feature type="region of interest" description="Disordered" evidence="4">
    <location>
        <begin position="61"/>
        <end position="81"/>
    </location>
</feature>
<feature type="region of interest" description="Disordered" evidence="4">
    <location>
        <begin position="147"/>
        <end position="180"/>
    </location>
</feature>
<feature type="region of interest" description="Disordered" evidence="4">
    <location>
        <begin position="225"/>
        <end position="262"/>
    </location>
</feature>
<feature type="region of interest" description="Disordered" evidence="4">
    <location>
        <begin position="292"/>
        <end position="333"/>
    </location>
</feature>
<feature type="region of interest" description="Disordered" evidence="4">
    <location>
        <begin position="345"/>
        <end position="381"/>
    </location>
</feature>
<feature type="compositionally biased region" description="Low complexity" evidence="4">
    <location>
        <begin position="147"/>
        <end position="157"/>
    </location>
</feature>
<feature type="compositionally biased region" description="Basic and acidic residues" evidence="4">
    <location>
        <begin position="244"/>
        <end position="256"/>
    </location>
</feature>
<feature type="compositionally biased region" description="Polar residues" evidence="4">
    <location>
        <begin position="301"/>
        <end position="311"/>
    </location>
</feature>
<feature type="compositionally biased region" description="Basic and acidic residues" evidence="4">
    <location>
        <begin position="313"/>
        <end position="328"/>
    </location>
</feature>
<feature type="modified residue" description="Phosphoserine" evidence="2">
    <location>
        <position position="101"/>
    </location>
</feature>
<feature type="modified residue" description="Phosphoserine" evidence="2">
    <location>
        <position position="301"/>
    </location>
</feature>
<feature type="modified residue" description="Phosphoserine" evidence="2">
    <location>
        <position position="311"/>
    </location>
</feature>
<feature type="modified residue" description="Phosphoserine" evidence="10 11">
    <location>
        <position position="382"/>
    </location>
</feature>
<feature type="cross-link" description="Glycyl lysine isopeptide (Lys-Gly) (interchain with G-Cter in SUMO2)" evidence="2">
    <location>
        <position position="186"/>
    </location>
</feature>
<feature type="splice variant" id="VSP_019848" description="In isoform 2." evidence="8">
    <location>
        <begin position="1"/>
        <end position="262"/>
    </location>
</feature>
<feature type="splice variant" id="VSP_019849" description="In isoform 2." evidence="8">
    <original>KSNQGFMHMKLAKTKEKYVLGQNSPPFDSVPEVIHYY</original>
    <variation>NYADPEAVCAMPILPRTARPSVRPSVHPSVRKICARR</variation>
    <location>
        <begin position="443"/>
        <end position="479"/>
    </location>
</feature>
<feature type="splice variant" id="VSP_019850" description="In isoform 2." evidence="8">
    <location>
        <begin position="480"/>
        <end position="503"/>
    </location>
</feature>
<proteinExistence type="evidence at protein level"/>
<sequence length="503" mass="54708">MAKWLNKYFSLGNSKTKSPPQPPRPDYREQRRRGERREQPPQAVPQACSASSASCGSAAACFSASSGSLPDDSGSTSDLIRAYRAQKERDFEDPYNGPGSSLRKLRAMCRLDYCGGGGGGDPGGGQRAFTAAAGAAGCCCAAAGAGAAASSSSSSGSPHLYRSSSERRPTTPAEVRYISPKHRLIKVESASAAGDPPGGVCSGGRTWSPTTCGGKKLLNKCSAEETGAGQKDKVTIADDYSDPFDAKSDLKSKAGKGESAGYMEPYEAQRIMTEFQRQESVRSQHKGIQLYDTPYEPEGQSVDSDSESTVSLRLRESKLPQDDDRPADEYDQPWEWNRVTIPALAAQFNGNEKRQSSPSPSRDRRRQLRAPGGGFKPIKHGSPEFCGILGERVDPTIPLEKQIWYHGAISRSDAENLLRLCKECSYLVRNSQTSKHDYSLSLKSNQGFMHMKLAKTKEKYVLGQNSPPFDSVPEVIHYYTTRKLPIKGAEHLSLLYPVAVRTL</sequence>
<comment type="function">
    <text evidence="1">Adapter protein which regulates several signal transduction cascades by linking activated receptors to downstream signaling components. May play a role in angiogenesis by regulating FGFR1, VEGFR2 and PDGFR signaling. May also play a role in T-cell antigen receptor/TCR signaling, interleukin-2 signaling, apoptosis and neuronal cells differentiation by mediating basic-FGF and NGF-induced signaling cascades. May also regulate IRS1 and IRS2 signaling in insulin-producing cells (By similarity).</text>
</comment>
<comment type="subunit">
    <text evidence="1 5">Interacts with phosphorylated 'Tyr-720' of the ligand-activated receptor PDGFRA via its SH2 domain. Interacts with the ligand-activated receptors PDGFRB, FGFR1, KDR/VEGFR2, IL2RB and IL2RG. Interacts with EPS8 and V-SRC. Interacts with GRB2 and GRAP. Interacts with CD3Z. Interacts with tyrosine-phosphorylated LAT upon T-cell antigen receptor activation. Interacts with PLCG1. Interacts with ZAP70, LCP2/SLP-76, VAV1 and GRAP2. Interacts with JAK1 and JAK3. Interacts with PTK2/FAK1. Interacts with CRK/CrKII. Interacts with IRS2 (By similarity). Interacts with PTPN11.</text>
</comment>
<comment type="subcellular location">
    <subcellularLocation>
        <location evidence="1">Cytoplasm</location>
    </subcellularLocation>
    <subcellularLocation>
        <location evidence="1">Cell membrane</location>
        <topology evidence="1">Peripheral membrane protein</topology>
        <orientation evidence="1">Cytoplasmic side</orientation>
    </subcellularLocation>
    <text evidence="1">Associates with membrane lipid rafts upon TCR stimulation.</text>
</comment>
<comment type="alternative products">
    <event type="alternative splicing"/>
    <isoform>
        <id>Q6PD21-1</id>
        <name>1</name>
        <sequence type="displayed"/>
    </isoform>
    <isoform>
        <id>Q6PD21-2</id>
        <name>2</name>
        <sequence type="described" ref="VSP_019848 VSP_019849 VSP_019850"/>
    </isoform>
</comment>
<comment type="tissue specificity">
    <text evidence="6">Expressed in heart, liver, brain and kidney (at protein level).</text>
</comment>
<comment type="induction">
    <text evidence="7">Up-regulated by okadaic acid and genistein.</text>
</comment>
<comment type="domain">
    <text evidence="1">The SH2 domain preferentially binds phosphopeptides with the consensus sequence Y-[TVI]-X-L and mediates interaction with PDGFRA, PDGFRB, FGRFR1, IL2RB, IL2RG, CD3Z and CRK/CrKII.</text>
</comment>
<comment type="PTM">
    <text evidence="1">Phosphorylated upon PDGFRA, PDGFRB, TCR, IL2 receptor, FGFR1 or VEGFR2 activation.</text>
</comment>
<comment type="sequence caution" evidence="9">
    <conflict type="erroneous initiation">
        <sequence resource="EMBL-CDS" id="AAH58986"/>
    </conflict>
</comment>
<name>SHB_MOUSE</name>